<comment type="miscellaneous">
    <text evidence="1">Completely overlaps YNL144C.</text>
</comment>
<comment type="caution">
    <text evidence="2">Product of a dubious gene prediction unlikely to encode a functional protein. Because of that it is not part of the S.cerevisiae S288c complete/reference proteome set.</text>
</comment>
<name>YN144_YEAST</name>
<feature type="chain" id="PRO_0000299674" description="Putative uncharacterized protein YNL144W-A">
    <location>
        <begin position="1"/>
        <end position="27"/>
    </location>
</feature>
<sequence length="27" mass="3053">MHLNESLIYLFLETSCVAGAHFESLLD</sequence>
<protein>
    <recommendedName>
        <fullName>Putative uncharacterized protein YNL144W-A</fullName>
    </recommendedName>
</protein>
<accession>Q8TGL9</accession>
<gene>
    <name type="ordered locus">YNL144W-A</name>
</gene>
<proteinExistence type="uncertain"/>
<evidence type="ECO:0000305" key="1"/>
<evidence type="ECO:0000305" key="2">
    <source>
    </source>
</evidence>
<organism>
    <name type="scientific">Saccharomyces cerevisiae (strain ATCC 204508 / S288c)</name>
    <name type="common">Baker's yeast</name>
    <dbReference type="NCBI Taxonomy" id="559292"/>
    <lineage>
        <taxon>Eukaryota</taxon>
        <taxon>Fungi</taxon>
        <taxon>Dikarya</taxon>
        <taxon>Ascomycota</taxon>
        <taxon>Saccharomycotina</taxon>
        <taxon>Saccharomycetes</taxon>
        <taxon>Saccharomycetales</taxon>
        <taxon>Saccharomycetaceae</taxon>
        <taxon>Saccharomyces</taxon>
    </lineage>
</organism>
<dbReference type="EMBL" id="X92517">
    <property type="status" value="NOT_ANNOTATED_CDS"/>
    <property type="molecule type" value="Genomic_DNA"/>
</dbReference>
<dbReference type="EMBL" id="Z46843">
    <property type="status" value="NOT_ANNOTATED_CDS"/>
    <property type="molecule type" value="Genomic_DNA"/>
</dbReference>
<dbReference type="EMBL" id="Z71420">
    <property type="status" value="NOT_ANNOTATED_CDS"/>
    <property type="molecule type" value="Genomic_DNA"/>
</dbReference>
<dbReference type="EMBL" id="AF479973">
    <property type="protein sequence ID" value="AAL79286.1"/>
    <property type="molecule type" value="Genomic_DNA"/>
</dbReference>
<dbReference type="STRING" id="4932.YNL144W-A"/>
<dbReference type="PaxDb" id="4932-YNL144W-A"/>
<dbReference type="EnsemblFungi" id="YNL144W-A_mRNA">
    <property type="protein sequence ID" value="YNL144W-A"/>
    <property type="gene ID" value="YNL144W-A"/>
</dbReference>
<dbReference type="AGR" id="SGD:S000028702"/>
<dbReference type="SGD" id="S000028702">
    <property type="gene designation" value="YNL144W-A"/>
</dbReference>
<dbReference type="HOGENOM" id="CLU_3415261_0_0_1"/>
<reference key="1">
    <citation type="journal article" date="1996" name="Yeast">
        <title>The sequence of 36.8 kb from the left arm of chromosome XIV reveals 24 complete open reading frames: 18 correspond to new genes, one of which encodes a protein similar to the human myotonic dystrophy kinase.</title>
        <authorList>
            <person name="Nasr F."/>
            <person name="Becam A.-M."/>
            <person name="Herbert C.J."/>
        </authorList>
    </citation>
    <scope>NUCLEOTIDE SEQUENCE [GENOMIC DNA]</scope>
    <source>
        <strain>ATCC 96604 / S288c / FY1679</strain>
    </source>
</reference>
<reference key="2">
    <citation type="journal article" date="1995" name="Yeast">
        <title>A 43.5 kb segment of yeast chromosome XIV, which contains MFA2, MEP2, CAP/SRV2, NAM9, FKB1/FPR1/RBP1, MOM22 and CPT1, predicts an adenosine deaminase gene and 14 new open reading frames.</title>
        <authorList>
            <person name="Mallet L."/>
            <person name="Bussereau F."/>
            <person name="Jacquet M."/>
        </authorList>
    </citation>
    <scope>NUCLEOTIDE SEQUENCE [GENOMIC DNA]</scope>
    <source>
        <strain>ATCC 204508 / S288c</strain>
    </source>
</reference>
<reference key="3">
    <citation type="journal article" date="1997" name="Nature">
        <title>The nucleotide sequence of Saccharomyces cerevisiae chromosome XIV and its evolutionary implications.</title>
        <authorList>
            <person name="Philippsen P."/>
            <person name="Kleine K."/>
            <person name="Poehlmann R."/>
            <person name="Duesterhoeft A."/>
            <person name="Hamberg K."/>
            <person name="Hegemann J.H."/>
            <person name="Obermaier B."/>
            <person name="Urrestarazu L.A."/>
            <person name="Aert R."/>
            <person name="Albermann K."/>
            <person name="Altmann R."/>
            <person name="Andre B."/>
            <person name="Baladron V."/>
            <person name="Ballesta J.P.G."/>
            <person name="Becam A.-M."/>
            <person name="Beinhauer J.D."/>
            <person name="Boskovic J."/>
            <person name="Buitrago M.J."/>
            <person name="Bussereau F."/>
            <person name="Coster F."/>
            <person name="Crouzet M."/>
            <person name="D'Angelo M."/>
            <person name="Dal Pero F."/>
            <person name="De Antoni A."/>
            <person name="del Rey F."/>
            <person name="Doignon F."/>
            <person name="Domdey H."/>
            <person name="Dubois E."/>
            <person name="Fiedler T.A."/>
            <person name="Fleig U."/>
            <person name="Floeth M."/>
            <person name="Fritz C."/>
            <person name="Gaillardin C."/>
            <person name="Garcia-Cantalejo J.M."/>
            <person name="Glansdorff N."/>
            <person name="Goffeau A."/>
            <person name="Gueldener U."/>
            <person name="Herbert C.J."/>
            <person name="Heumann K."/>
            <person name="Heuss-Neitzel D."/>
            <person name="Hilbert H."/>
            <person name="Hinni K."/>
            <person name="Iraqui Houssaini I."/>
            <person name="Jacquet M."/>
            <person name="Jimenez A."/>
            <person name="Jonniaux J.-L."/>
            <person name="Karpfinger-Hartl L."/>
            <person name="Lanfranchi G."/>
            <person name="Lepingle A."/>
            <person name="Levesque H."/>
            <person name="Lyck R."/>
            <person name="Maftahi M."/>
            <person name="Mallet L."/>
            <person name="Maurer C.T.C."/>
            <person name="Messenguy F."/>
            <person name="Mewes H.-W."/>
            <person name="Moestl D."/>
            <person name="Nasr F."/>
            <person name="Nicaud J.-M."/>
            <person name="Niedenthal R.K."/>
            <person name="Pandolfo D."/>
            <person name="Pierard A."/>
            <person name="Piravandi E."/>
            <person name="Planta R.J."/>
            <person name="Pohl T.M."/>
            <person name="Purnelle B."/>
            <person name="Rebischung C."/>
            <person name="Remacha M.A."/>
            <person name="Revuelta J.L."/>
            <person name="Rinke M."/>
            <person name="Saiz J.E."/>
            <person name="Sartorello F."/>
            <person name="Scherens B."/>
            <person name="Sen-Gupta M."/>
            <person name="Soler-Mira A."/>
            <person name="Urbanus J.H.M."/>
            <person name="Valle G."/>
            <person name="Van Dyck L."/>
            <person name="Verhasselt P."/>
            <person name="Vierendeels F."/>
            <person name="Vissers S."/>
            <person name="Voet M."/>
            <person name="Volckaert G."/>
            <person name="Wach A."/>
            <person name="Wambutt R."/>
            <person name="Wedler H."/>
            <person name="Zollner A."/>
            <person name="Hani J."/>
        </authorList>
    </citation>
    <scope>NUCLEOTIDE SEQUENCE [LARGE SCALE GENOMIC DNA]</scope>
    <source>
        <strain>ATCC 204508 / S288c</strain>
    </source>
</reference>
<reference key="4">
    <citation type="journal article" date="2014" name="G3 (Bethesda)">
        <title>The reference genome sequence of Saccharomyces cerevisiae: Then and now.</title>
        <authorList>
            <person name="Engel S.R."/>
            <person name="Dietrich F.S."/>
            <person name="Fisk D.G."/>
            <person name="Binkley G."/>
            <person name="Balakrishnan R."/>
            <person name="Costanzo M.C."/>
            <person name="Dwight S.S."/>
            <person name="Hitz B.C."/>
            <person name="Karra K."/>
            <person name="Nash R.S."/>
            <person name="Weng S."/>
            <person name="Wong E.D."/>
            <person name="Lloyd P."/>
            <person name="Skrzypek M.S."/>
            <person name="Miyasato S.R."/>
            <person name="Simison M."/>
            <person name="Cherry J.M."/>
        </authorList>
    </citation>
    <scope>GENOME REANNOTATION</scope>
    <source>
        <strain>ATCC 204508 / S288c</strain>
    </source>
</reference>
<reference key="5">
    <citation type="journal article" date="2002" name="Nat. Biotechnol.">
        <title>An integrated approach for finding overlooked genes in yeast.</title>
        <authorList>
            <person name="Kumar A."/>
            <person name="Harrison P.M."/>
            <person name="Cheung K.-H."/>
            <person name="Lan N."/>
            <person name="Echols N."/>
            <person name="Bertone P."/>
            <person name="Miller P."/>
            <person name="Gerstein M.B."/>
            <person name="Snyder M."/>
        </authorList>
    </citation>
    <scope>NUCLEOTIDE SEQUENCE [GENOMIC DNA]</scope>
</reference>